<name>BAME_NEIMB</name>
<accession>Q9K1F0</accession>
<sequence>MNKTLILALSALLGLAACSAERVSLFPSYKLKIIQGNELEPRAVAALRPGMTKDQVLLLLGSPILRDAFHTDRWDYTFNTSRNGIIKERSNLTVYFENGVLVRTEGDVLQNAAEALKDRQNTDKP</sequence>
<feature type="signal peptide" evidence="1">
    <location>
        <begin position="1"/>
        <end position="17"/>
    </location>
</feature>
<feature type="chain" id="PRO_0000417865" description="Outer membrane protein assembly factor BamE">
    <location>
        <begin position="18"/>
        <end position="125"/>
    </location>
</feature>
<feature type="lipid moiety-binding region" description="N-palmitoyl cysteine" evidence="1">
    <location>
        <position position="18"/>
    </location>
</feature>
<feature type="lipid moiety-binding region" description="S-diacylglycerol cysteine" evidence="1">
    <location>
        <position position="18"/>
    </location>
</feature>
<dbReference type="EMBL" id="AE002098">
    <property type="protein sequence ID" value="AAF40661.1"/>
    <property type="molecule type" value="Genomic_DNA"/>
</dbReference>
<dbReference type="PIR" id="F81226">
    <property type="entry name" value="F81226"/>
</dbReference>
<dbReference type="RefSeq" id="NP_273262.1">
    <property type="nucleotide sequence ID" value="NC_003112.2"/>
</dbReference>
<dbReference type="RefSeq" id="WP_002218608.1">
    <property type="nucleotide sequence ID" value="NC_003112.2"/>
</dbReference>
<dbReference type="SMR" id="Q9K1F0"/>
<dbReference type="FunCoup" id="Q9K1F0">
    <property type="interactions" value="43"/>
</dbReference>
<dbReference type="STRING" id="122586.NMB0204"/>
<dbReference type="PaxDb" id="122586-NMB0204"/>
<dbReference type="KEGG" id="nme:NMB0204"/>
<dbReference type="PATRIC" id="fig|122586.8.peg.253"/>
<dbReference type="HOGENOM" id="CLU_083835_3_1_4"/>
<dbReference type="InParanoid" id="Q9K1F0"/>
<dbReference type="OrthoDB" id="9808250at2"/>
<dbReference type="Proteomes" id="UP000000425">
    <property type="component" value="Chromosome"/>
</dbReference>
<dbReference type="GO" id="GO:1990063">
    <property type="term" value="C:Bam protein complex"/>
    <property type="evidence" value="ECO:0000318"/>
    <property type="project" value="GO_Central"/>
</dbReference>
<dbReference type="GO" id="GO:0030674">
    <property type="term" value="F:protein-macromolecule adaptor activity"/>
    <property type="evidence" value="ECO:0000318"/>
    <property type="project" value="GO_Central"/>
</dbReference>
<dbReference type="GO" id="GO:0043165">
    <property type="term" value="P:Gram-negative-bacterium-type cell outer membrane assembly"/>
    <property type="evidence" value="ECO:0000318"/>
    <property type="project" value="GO_Central"/>
</dbReference>
<dbReference type="GO" id="GO:0051205">
    <property type="term" value="P:protein insertion into membrane"/>
    <property type="evidence" value="ECO:0000318"/>
    <property type="project" value="GO_Central"/>
</dbReference>
<dbReference type="FunFam" id="3.30.1450.10:FF:000006">
    <property type="entry name" value="Outer membrane protein assembly factor BamE"/>
    <property type="match status" value="1"/>
</dbReference>
<dbReference type="Gene3D" id="3.30.1450.10">
    <property type="match status" value="1"/>
</dbReference>
<dbReference type="HAMAP" id="MF_00925">
    <property type="entry name" value="OM_assembly_BamE"/>
    <property type="match status" value="1"/>
</dbReference>
<dbReference type="InterPro" id="IPR026592">
    <property type="entry name" value="BamE"/>
</dbReference>
<dbReference type="InterPro" id="IPR037873">
    <property type="entry name" value="BamE-like"/>
</dbReference>
<dbReference type="InterPro" id="IPR007450">
    <property type="entry name" value="BamE_dom"/>
</dbReference>
<dbReference type="PANTHER" id="PTHR37482">
    <property type="entry name" value="OUTER MEMBRANE PROTEIN ASSEMBLY FACTOR BAME"/>
    <property type="match status" value="1"/>
</dbReference>
<dbReference type="PANTHER" id="PTHR37482:SF1">
    <property type="entry name" value="OUTER MEMBRANE PROTEIN ASSEMBLY FACTOR BAME"/>
    <property type="match status" value="1"/>
</dbReference>
<dbReference type="Pfam" id="PF04355">
    <property type="entry name" value="BamE"/>
    <property type="match status" value="1"/>
</dbReference>
<dbReference type="PROSITE" id="PS51257">
    <property type="entry name" value="PROKAR_LIPOPROTEIN"/>
    <property type="match status" value="1"/>
</dbReference>
<gene>
    <name evidence="1" type="primary">bamE</name>
    <name type="ordered locus">NMB0204</name>
</gene>
<evidence type="ECO:0000255" key="1">
    <source>
        <dbReference type="HAMAP-Rule" id="MF_00925"/>
    </source>
</evidence>
<protein>
    <recommendedName>
        <fullName evidence="1">Outer membrane protein assembly factor BamE</fullName>
    </recommendedName>
</protein>
<keyword id="KW-0998">Cell outer membrane</keyword>
<keyword id="KW-0449">Lipoprotein</keyword>
<keyword id="KW-0472">Membrane</keyword>
<keyword id="KW-0564">Palmitate</keyword>
<keyword id="KW-1185">Reference proteome</keyword>
<keyword id="KW-0732">Signal</keyword>
<organism>
    <name type="scientific">Neisseria meningitidis serogroup B (strain ATCC BAA-335 / MC58)</name>
    <dbReference type="NCBI Taxonomy" id="122586"/>
    <lineage>
        <taxon>Bacteria</taxon>
        <taxon>Pseudomonadati</taxon>
        <taxon>Pseudomonadota</taxon>
        <taxon>Betaproteobacteria</taxon>
        <taxon>Neisseriales</taxon>
        <taxon>Neisseriaceae</taxon>
        <taxon>Neisseria</taxon>
    </lineage>
</organism>
<reference key="1">
    <citation type="journal article" date="2000" name="Science">
        <title>Complete genome sequence of Neisseria meningitidis serogroup B strain MC58.</title>
        <authorList>
            <person name="Tettelin H."/>
            <person name="Saunders N.J."/>
            <person name="Heidelberg J.F."/>
            <person name="Jeffries A.C."/>
            <person name="Nelson K.E."/>
            <person name="Eisen J.A."/>
            <person name="Ketchum K.A."/>
            <person name="Hood D.W."/>
            <person name="Peden J.F."/>
            <person name="Dodson R.J."/>
            <person name="Nelson W.C."/>
            <person name="Gwinn M.L."/>
            <person name="DeBoy R.T."/>
            <person name="Peterson J.D."/>
            <person name="Hickey E.K."/>
            <person name="Haft D.H."/>
            <person name="Salzberg S.L."/>
            <person name="White O."/>
            <person name="Fleischmann R.D."/>
            <person name="Dougherty B.A."/>
            <person name="Mason T.M."/>
            <person name="Ciecko A."/>
            <person name="Parksey D.S."/>
            <person name="Blair E."/>
            <person name="Cittone H."/>
            <person name="Clark E.B."/>
            <person name="Cotton M.D."/>
            <person name="Utterback T.R."/>
            <person name="Khouri H.M."/>
            <person name="Qin H."/>
            <person name="Vamathevan J.J."/>
            <person name="Gill J."/>
            <person name="Scarlato V."/>
            <person name="Masignani V."/>
            <person name="Pizza M."/>
            <person name="Grandi G."/>
            <person name="Sun L."/>
            <person name="Smith H.O."/>
            <person name="Fraser C.M."/>
            <person name="Moxon E.R."/>
            <person name="Rappuoli R."/>
            <person name="Venter J.C."/>
        </authorList>
    </citation>
    <scope>NUCLEOTIDE SEQUENCE [LARGE SCALE GENOMIC DNA]</scope>
    <source>
        <strain>ATCC BAA-335 / MC58</strain>
    </source>
</reference>
<proteinExistence type="inferred from homology"/>
<comment type="function">
    <text evidence="1">Part of the outer membrane protein assembly complex, which is involved in assembly and insertion of beta-barrel proteins into the outer membrane.</text>
</comment>
<comment type="subunit">
    <text evidence="1">Part of the Bam complex.</text>
</comment>
<comment type="subcellular location">
    <subcellularLocation>
        <location evidence="1">Cell outer membrane</location>
        <topology evidence="1">Lipid-anchor</topology>
    </subcellularLocation>
</comment>
<comment type="similarity">
    <text evidence="1">Belongs to the BamE family.</text>
</comment>